<reference key="1">
    <citation type="journal article" date="2004" name="Science">
        <title>The complete genome sequence of Propionibacterium acnes, a commensal of human skin.</title>
        <authorList>
            <person name="Brueggemann H."/>
            <person name="Henne A."/>
            <person name="Hoster F."/>
            <person name="Liesegang H."/>
            <person name="Wiezer A."/>
            <person name="Strittmatter A."/>
            <person name="Hujer S."/>
            <person name="Duerre P."/>
            <person name="Gottschalk G."/>
        </authorList>
    </citation>
    <scope>NUCLEOTIDE SEQUENCE [LARGE SCALE GENOMIC DNA]</scope>
    <source>
        <strain>DSM 16379 / KPA171202</strain>
    </source>
</reference>
<evidence type="ECO:0000255" key="1">
    <source>
        <dbReference type="HAMAP-Rule" id="MF_01006"/>
    </source>
</evidence>
<organism>
    <name type="scientific">Cutibacterium acnes (strain DSM 16379 / KPA171202)</name>
    <name type="common">Propionibacterium acnes</name>
    <dbReference type="NCBI Taxonomy" id="267747"/>
    <lineage>
        <taxon>Bacteria</taxon>
        <taxon>Bacillati</taxon>
        <taxon>Actinomycetota</taxon>
        <taxon>Actinomycetes</taxon>
        <taxon>Propionibacteriales</taxon>
        <taxon>Propionibacteriaceae</taxon>
        <taxon>Cutibacterium</taxon>
    </lineage>
</organism>
<proteinExistence type="inferred from homology"/>
<sequence length="284" mass="30279">MNWLHAIILGIVEGITEFLPVSSTGHLRIVEKLLGYDIQGAGITAFTAIIQVGAIIAAILYFWSDIVRIVVAWCKGLAHKEDRDDPDYTLGWGIILGSIPVGVVGLVFKDAIETTLSSLWVVAIALILWSGVMWLGDRQLGLNRGMKEIGIVDAIVIGCFQALAPLFPGISRSGATISAGLFRKFDRATATRLSFFMGIPALVAAGIYESVSAASDISIAQGGAVAIGWGPTILATVVSLIVAYVSIAWLLKFVSSNKFTGFMWYRVVVGLIIIGLILSNVVTA</sequence>
<keyword id="KW-0046">Antibiotic resistance</keyword>
<keyword id="KW-1003">Cell membrane</keyword>
<keyword id="KW-0133">Cell shape</keyword>
<keyword id="KW-0961">Cell wall biogenesis/degradation</keyword>
<keyword id="KW-0378">Hydrolase</keyword>
<keyword id="KW-0472">Membrane</keyword>
<keyword id="KW-0573">Peptidoglycan synthesis</keyword>
<keyword id="KW-0812">Transmembrane</keyword>
<keyword id="KW-1133">Transmembrane helix</keyword>
<gene>
    <name evidence="1" type="primary">uppP</name>
    <name type="ordered locus">PPA2224</name>
</gene>
<comment type="function">
    <text evidence="1">Catalyzes the dephosphorylation of undecaprenyl diphosphate (UPP). Confers resistance to bacitracin.</text>
</comment>
<comment type="catalytic activity">
    <reaction evidence="1">
        <text>di-trans,octa-cis-undecaprenyl diphosphate + H2O = di-trans,octa-cis-undecaprenyl phosphate + phosphate + H(+)</text>
        <dbReference type="Rhea" id="RHEA:28094"/>
        <dbReference type="ChEBI" id="CHEBI:15377"/>
        <dbReference type="ChEBI" id="CHEBI:15378"/>
        <dbReference type="ChEBI" id="CHEBI:43474"/>
        <dbReference type="ChEBI" id="CHEBI:58405"/>
        <dbReference type="ChEBI" id="CHEBI:60392"/>
        <dbReference type="EC" id="3.6.1.27"/>
    </reaction>
</comment>
<comment type="subcellular location">
    <subcellularLocation>
        <location evidence="1">Cell membrane</location>
        <topology evidence="1">Multi-pass membrane protein</topology>
    </subcellularLocation>
</comment>
<comment type="miscellaneous">
    <text>Bacitracin is thought to be involved in the inhibition of peptidoglycan synthesis by sequestering undecaprenyl diphosphate, thereby reducing the pool of lipid carrier available.</text>
</comment>
<comment type="similarity">
    <text evidence="1">Belongs to the UppP family.</text>
</comment>
<feature type="chain" id="PRO_0000151177" description="Undecaprenyl-diphosphatase">
    <location>
        <begin position="1"/>
        <end position="284"/>
    </location>
</feature>
<feature type="transmembrane region" description="Helical" evidence="1">
    <location>
        <begin position="1"/>
        <end position="21"/>
    </location>
</feature>
<feature type="transmembrane region" description="Helical" evidence="1">
    <location>
        <begin position="43"/>
        <end position="63"/>
    </location>
</feature>
<feature type="transmembrane region" description="Helical" evidence="1">
    <location>
        <begin position="88"/>
        <end position="108"/>
    </location>
</feature>
<feature type="transmembrane region" description="Helical" evidence="1">
    <location>
        <begin position="116"/>
        <end position="136"/>
    </location>
</feature>
<feature type="transmembrane region" description="Helical" evidence="1">
    <location>
        <begin position="149"/>
        <end position="169"/>
    </location>
</feature>
<feature type="transmembrane region" description="Helical" evidence="1">
    <location>
        <begin position="193"/>
        <end position="213"/>
    </location>
</feature>
<feature type="transmembrane region" description="Helical" evidence="1">
    <location>
        <begin position="225"/>
        <end position="245"/>
    </location>
</feature>
<feature type="transmembrane region" description="Helical" evidence="1">
    <location>
        <begin position="259"/>
        <end position="279"/>
    </location>
</feature>
<accession>Q6A5N5</accession>
<protein>
    <recommendedName>
        <fullName evidence="1">Undecaprenyl-diphosphatase</fullName>
        <ecNumber evidence="1">3.6.1.27</ecNumber>
    </recommendedName>
    <alternativeName>
        <fullName evidence="1">Bacitracin resistance protein</fullName>
    </alternativeName>
    <alternativeName>
        <fullName evidence="1">Undecaprenyl pyrophosphate phosphatase</fullName>
    </alternativeName>
</protein>
<dbReference type="EC" id="3.6.1.27" evidence="1"/>
<dbReference type="EMBL" id="AE017283">
    <property type="protein sequence ID" value="AAT83928.1"/>
    <property type="molecule type" value="Genomic_DNA"/>
</dbReference>
<dbReference type="RefSeq" id="WP_002516473.1">
    <property type="nucleotide sequence ID" value="NZ_CP025935.1"/>
</dbReference>
<dbReference type="SMR" id="Q6A5N5"/>
<dbReference type="EnsemblBacteria" id="AAT83928">
    <property type="protein sequence ID" value="AAT83928"/>
    <property type="gene ID" value="PPA2224"/>
</dbReference>
<dbReference type="KEGG" id="pac:PPA2224"/>
<dbReference type="eggNOG" id="COG1968">
    <property type="taxonomic scope" value="Bacteria"/>
</dbReference>
<dbReference type="HOGENOM" id="CLU_060296_1_0_11"/>
<dbReference type="Proteomes" id="UP000000603">
    <property type="component" value="Chromosome"/>
</dbReference>
<dbReference type="GO" id="GO:0005886">
    <property type="term" value="C:plasma membrane"/>
    <property type="evidence" value="ECO:0007669"/>
    <property type="project" value="UniProtKB-SubCell"/>
</dbReference>
<dbReference type="GO" id="GO:0050380">
    <property type="term" value="F:undecaprenyl-diphosphatase activity"/>
    <property type="evidence" value="ECO:0007669"/>
    <property type="project" value="UniProtKB-UniRule"/>
</dbReference>
<dbReference type="GO" id="GO:0071555">
    <property type="term" value="P:cell wall organization"/>
    <property type="evidence" value="ECO:0007669"/>
    <property type="project" value="UniProtKB-KW"/>
</dbReference>
<dbReference type="GO" id="GO:0009252">
    <property type="term" value="P:peptidoglycan biosynthetic process"/>
    <property type="evidence" value="ECO:0007669"/>
    <property type="project" value="UniProtKB-KW"/>
</dbReference>
<dbReference type="GO" id="GO:0008360">
    <property type="term" value="P:regulation of cell shape"/>
    <property type="evidence" value="ECO:0007669"/>
    <property type="project" value="UniProtKB-KW"/>
</dbReference>
<dbReference type="GO" id="GO:0046677">
    <property type="term" value="P:response to antibiotic"/>
    <property type="evidence" value="ECO:0007669"/>
    <property type="project" value="UniProtKB-UniRule"/>
</dbReference>
<dbReference type="HAMAP" id="MF_01006">
    <property type="entry name" value="Undec_diphosphatase"/>
    <property type="match status" value="1"/>
</dbReference>
<dbReference type="InterPro" id="IPR003824">
    <property type="entry name" value="UppP"/>
</dbReference>
<dbReference type="NCBIfam" id="NF001392">
    <property type="entry name" value="PRK00281.2-1"/>
    <property type="match status" value="1"/>
</dbReference>
<dbReference type="NCBIfam" id="TIGR00753">
    <property type="entry name" value="undec_PP_bacA"/>
    <property type="match status" value="1"/>
</dbReference>
<dbReference type="PANTHER" id="PTHR30622">
    <property type="entry name" value="UNDECAPRENYL-DIPHOSPHATASE"/>
    <property type="match status" value="1"/>
</dbReference>
<dbReference type="PANTHER" id="PTHR30622:SF3">
    <property type="entry name" value="UNDECAPRENYL-DIPHOSPHATASE"/>
    <property type="match status" value="1"/>
</dbReference>
<dbReference type="Pfam" id="PF02673">
    <property type="entry name" value="BacA"/>
    <property type="match status" value="1"/>
</dbReference>
<name>UPPP_CUTAK</name>